<proteinExistence type="inferred from homology"/>
<name>ATP6_VIBCM</name>
<dbReference type="EMBL" id="CP001233">
    <property type="protein sequence ID" value="ACP06982.1"/>
    <property type="molecule type" value="Genomic_DNA"/>
</dbReference>
<dbReference type="RefSeq" id="WP_000729881.1">
    <property type="nucleotide sequence ID" value="NC_012578.1"/>
</dbReference>
<dbReference type="SMR" id="C3LSJ5"/>
<dbReference type="GeneID" id="69721154"/>
<dbReference type="KEGG" id="vcm:VCM66_2690"/>
<dbReference type="HOGENOM" id="CLU_041018_1_0_6"/>
<dbReference type="Proteomes" id="UP000001217">
    <property type="component" value="Chromosome I"/>
</dbReference>
<dbReference type="GO" id="GO:0005886">
    <property type="term" value="C:plasma membrane"/>
    <property type="evidence" value="ECO:0007669"/>
    <property type="project" value="UniProtKB-SubCell"/>
</dbReference>
<dbReference type="GO" id="GO:0045259">
    <property type="term" value="C:proton-transporting ATP synthase complex"/>
    <property type="evidence" value="ECO:0007669"/>
    <property type="project" value="UniProtKB-KW"/>
</dbReference>
<dbReference type="GO" id="GO:0046933">
    <property type="term" value="F:proton-transporting ATP synthase activity, rotational mechanism"/>
    <property type="evidence" value="ECO:0007669"/>
    <property type="project" value="UniProtKB-UniRule"/>
</dbReference>
<dbReference type="GO" id="GO:0042777">
    <property type="term" value="P:proton motive force-driven plasma membrane ATP synthesis"/>
    <property type="evidence" value="ECO:0007669"/>
    <property type="project" value="TreeGrafter"/>
</dbReference>
<dbReference type="CDD" id="cd00310">
    <property type="entry name" value="ATP-synt_Fo_a_6"/>
    <property type="match status" value="1"/>
</dbReference>
<dbReference type="FunFam" id="1.20.120.220:FF:000002">
    <property type="entry name" value="ATP synthase subunit a"/>
    <property type="match status" value="1"/>
</dbReference>
<dbReference type="Gene3D" id="1.20.120.220">
    <property type="entry name" value="ATP synthase, F0 complex, subunit A"/>
    <property type="match status" value="1"/>
</dbReference>
<dbReference type="HAMAP" id="MF_01393">
    <property type="entry name" value="ATP_synth_a_bact"/>
    <property type="match status" value="1"/>
</dbReference>
<dbReference type="InterPro" id="IPR045082">
    <property type="entry name" value="ATP_syn_F0_a_bact/chloroplast"/>
</dbReference>
<dbReference type="InterPro" id="IPR000568">
    <property type="entry name" value="ATP_synth_F0_asu"/>
</dbReference>
<dbReference type="InterPro" id="IPR023011">
    <property type="entry name" value="ATP_synth_F0_asu_AS"/>
</dbReference>
<dbReference type="InterPro" id="IPR035908">
    <property type="entry name" value="F0_ATP_A_sf"/>
</dbReference>
<dbReference type="NCBIfam" id="TIGR01131">
    <property type="entry name" value="ATP_synt_6_or_A"/>
    <property type="match status" value="1"/>
</dbReference>
<dbReference type="NCBIfam" id="NF004477">
    <property type="entry name" value="PRK05815.1-1"/>
    <property type="match status" value="1"/>
</dbReference>
<dbReference type="PANTHER" id="PTHR42823">
    <property type="entry name" value="ATP SYNTHASE SUBUNIT A, CHLOROPLASTIC"/>
    <property type="match status" value="1"/>
</dbReference>
<dbReference type="PANTHER" id="PTHR42823:SF3">
    <property type="entry name" value="ATP SYNTHASE SUBUNIT A, CHLOROPLASTIC"/>
    <property type="match status" value="1"/>
</dbReference>
<dbReference type="Pfam" id="PF00119">
    <property type="entry name" value="ATP-synt_A"/>
    <property type="match status" value="1"/>
</dbReference>
<dbReference type="PRINTS" id="PR00123">
    <property type="entry name" value="ATPASEA"/>
</dbReference>
<dbReference type="SUPFAM" id="SSF81336">
    <property type="entry name" value="F1F0 ATP synthase subunit A"/>
    <property type="match status" value="1"/>
</dbReference>
<dbReference type="PROSITE" id="PS00449">
    <property type="entry name" value="ATPASE_A"/>
    <property type="match status" value="1"/>
</dbReference>
<accession>C3LSJ5</accession>
<keyword id="KW-0066">ATP synthesis</keyword>
<keyword id="KW-0997">Cell inner membrane</keyword>
<keyword id="KW-1003">Cell membrane</keyword>
<keyword id="KW-0138">CF(0)</keyword>
<keyword id="KW-0375">Hydrogen ion transport</keyword>
<keyword id="KW-0406">Ion transport</keyword>
<keyword id="KW-0472">Membrane</keyword>
<keyword id="KW-0812">Transmembrane</keyword>
<keyword id="KW-1133">Transmembrane helix</keyword>
<keyword id="KW-0813">Transport</keyword>
<organism>
    <name type="scientific">Vibrio cholerae serotype O1 (strain M66-2)</name>
    <dbReference type="NCBI Taxonomy" id="579112"/>
    <lineage>
        <taxon>Bacteria</taxon>
        <taxon>Pseudomonadati</taxon>
        <taxon>Pseudomonadota</taxon>
        <taxon>Gammaproteobacteria</taxon>
        <taxon>Vibrionales</taxon>
        <taxon>Vibrionaceae</taxon>
        <taxon>Vibrio</taxon>
    </lineage>
</organism>
<feature type="chain" id="PRO_1000184297" description="ATP synthase subunit a">
    <location>
        <begin position="1"/>
        <end position="270"/>
    </location>
</feature>
<feature type="transmembrane region" description="Helical" evidence="1">
    <location>
        <begin position="37"/>
        <end position="57"/>
    </location>
</feature>
<feature type="transmembrane region" description="Helical" evidence="1">
    <location>
        <begin position="98"/>
        <end position="118"/>
    </location>
</feature>
<feature type="transmembrane region" description="Helical" evidence="1">
    <location>
        <begin position="143"/>
        <end position="163"/>
    </location>
</feature>
<feature type="transmembrane region" description="Helical" evidence="1">
    <location>
        <begin position="208"/>
        <end position="228"/>
    </location>
</feature>
<feature type="transmembrane region" description="Helical" evidence="1">
    <location>
        <begin position="239"/>
        <end position="259"/>
    </location>
</feature>
<comment type="function">
    <text evidence="1">Key component of the proton channel; it plays a direct role in the translocation of protons across the membrane.</text>
</comment>
<comment type="subunit">
    <text evidence="1">F-type ATPases have 2 components, CF(1) - the catalytic core - and CF(0) - the membrane proton channel. CF(1) has five subunits: alpha(3), beta(3), gamma(1), delta(1), epsilon(1). CF(0) has three main subunits: a(1), b(2) and c(9-12). The alpha and beta chains form an alternating ring which encloses part of the gamma chain. CF(1) is attached to CF(0) by a central stalk formed by the gamma and epsilon chains, while a peripheral stalk is formed by the delta and b chains.</text>
</comment>
<comment type="subcellular location">
    <subcellularLocation>
        <location evidence="1">Cell inner membrane</location>
        <topology evidence="1">Multi-pass membrane protein</topology>
    </subcellularLocation>
</comment>
<comment type="similarity">
    <text evidence="1">Belongs to the ATPase A chain family.</text>
</comment>
<evidence type="ECO:0000255" key="1">
    <source>
        <dbReference type="HAMAP-Rule" id="MF_01393"/>
    </source>
</evidence>
<sequence>MAAPGEALTPSSYITHHLTNLSTYKLGLVAEESSFWNVHIDSLFFSVLTGLIFLGVFRAVARKATAGVPGKLQCAVEMVVEFVDKNVKDTFHGRNPLIAPLALTIFCWVFLMNLMDLVPIDFLPYPAQHWLGIPYLKVVPSADVNITMAMALGVFALMIYYSIKVKGLGGFAKELALHPFNHWIMIPFNLLIEVVSLLAKPLSLGMRLFGNMFAGEVVFILCAAMLPWYLQWMGSLPWAIFHILVILIQSFVFMMLTIVYMSMAHEDNDH</sequence>
<protein>
    <recommendedName>
        <fullName evidence="1">ATP synthase subunit a</fullName>
    </recommendedName>
    <alternativeName>
        <fullName evidence="1">ATP synthase F0 sector subunit a</fullName>
    </alternativeName>
    <alternativeName>
        <fullName evidence="1">F-ATPase subunit 6</fullName>
    </alternativeName>
</protein>
<reference key="1">
    <citation type="journal article" date="2008" name="PLoS ONE">
        <title>A recalibrated molecular clock and independent origins for the cholera pandemic clones.</title>
        <authorList>
            <person name="Feng L."/>
            <person name="Reeves P.R."/>
            <person name="Lan R."/>
            <person name="Ren Y."/>
            <person name="Gao C."/>
            <person name="Zhou Z."/>
            <person name="Ren Y."/>
            <person name="Cheng J."/>
            <person name="Wang W."/>
            <person name="Wang J."/>
            <person name="Qian W."/>
            <person name="Li D."/>
            <person name="Wang L."/>
        </authorList>
    </citation>
    <scope>NUCLEOTIDE SEQUENCE [LARGE SCALE GENOMIC DNA]</scope>
    <source>
        <strain>M66-2</strain>
    </source>
</reference>
<gene>
    <name evidence="1" type="primary">atpB</name>
    <name type="ordered locus">VCM66_2690</name>
</gene>